<dbReference type="EMBL" id="M29855">
    <property type="protein sequence ID" value="AAA39295.1"/>
    <property type="molecule type" value="mRNA"/>
</dbReference>
<dbReference type="CCDS" id="CCDS27611.1"/>
<dbReference type="PIR" id="A40091">
    <property type="entry name" value="A40091"/>
</dbReference>
<dbReference type="RefSeq" id="NP_031807.1">
    <property type="nucleotide sequence ID" value="NM_007781.3"/>
</dbReference>
<dbReference type="PDB" id="4QQV">
    <property type="method" value="X-ray"/>
    <property type="resolution" value="3.45 A"/>
    <property type="chains" value="A/B/C/D=23-438"/>
</dbReference>
<dbReference type="PDBsum" id="4QQV"/>
<dbReference type="SMR" id="P26954"/>
<dbReference type="BioGRID" id="198933">
    <property type="interactions" value="3"/>
</dbReference>
<dbReference type="DIP" id="DIP-143N"/>
<dbReference type="FunCoup" id="P26954">
    <property type="interactions" value="784"/>
</dbReference>
<dbReference type="MINT" id="P26954"/>
<dbReference type="STRING" id="10090.ENSMUSP00000094083"/>
<dbReference type="GlyCosmos" id="P26954">
    <property type="glycosylation" value="2 sites, No reported glycans"/>
</dbReference>
<dbReference type="GlyGen" id="P26954">
    <property type="glycosylation" value="3 sites"/>
</dbReference>
<dbReference type="iPTMnet" id="P26954"/>
<dbReference type="SwissPalm" id="P26954"/>
<dbReference type="PaxDb" id="10090-ENSMUSP00000094083"/>
<dbReference type="ProteomicsDB" id="267046"/>
<dbReference type="DNASU" id="12984"/>
<dbReference type="Ensembl" id="ENSMUST00000096356.5">
    <property type="protein sequence ID" value="ENSMUSP00000094083.4"/>
    <property type="gene ID" value="ENSMUSG00000071714.8"/>
</dbReference>
<dbReference type="GeneID" id="12984"/>
<dbReference type="KEGG" id="mmu:12984"/>
<dbReference type="UCSC" id="uc007woy.2">
    <property type="organism name" value="mouse"/>
</dbReference>
<dbReference type="AGR" id="MGI:1339760"/>
<dbReference type="CTD" id="12984"/>
<dbReference type="MGI" id="MGI:1339760">
    <property type="gene designation" value="Csf2rb2"/>
</dbReference>
<dbReference type="VEuPathDB" id="HostDB:ENSMUSG00000071714"/>
<dbReference type="eggNOG" id="ENOG502RP2T">
    <property type="taxonomic scope" value="Eukaryota"/>
</dbReference>
<dbReference type="GeneTree" id="ENSGT00510000048963"/>
<dbReference type="HOGENOM" id="CLU_015884_0_0_1"/>
<dbReference type="InParanoid" id="P26954"/>
<dbReference type="OMA" id="RRCVIPH"/>
<dbReference type="OrthoDB" id="8906725at2759"/>
<dbReference type="PhylomeDB" id="P26954"/>
<dbReference type="TreeFam" id="TF337996"/>
<dbReference type="Reactome" id="R-MMU-512988">
    <property type="pathway name" value="Interleukin-3, Interleukin-5 and GM-CSF signaling"/>
</dbReference>
<dbReference type="Reactome" id="R-MMU-5673001">
    <property type="pathway name" value="RAF/MAP kinase cascade"/>
</dbReference>
<dbReference type="Reactome" id="R-MMU-912526">
    <property type="pathway name" value="Interleukin receptor SHC signaling"/>
</dbReference>
<dbReference type="BioGRID-ORCS" id="12984">
    <property type="hits" value="2 hits in 78 CRISPR screens"/>
</dbReference>
<dbReference type="ChiTaRS" id="Csf2rb2">
    <property type="organism name" value="mouse"/>
</dbReference>
<dbReference type="EvolutionaryTrace" id="P26954"/>
<dbReference type="PRO" id="PR:P26954"/>
<dbReference type="Proteomes" id="UP000000589">
    <property type="component" value="Chromosome 15"/>
</dbReference>
<dbReference type="RNAct" id="P26954">
    <property type="molecule type" value="protein"/>
</dbReference>
<dbReference type="Bgee" id="ENSMUSG00000071714">
    <property type="expression patterns" value="Expressed in peripheral lymph node and 84 other cell types or tissues"/>
</dbReference>
<dbReference type="ExpressionAtlas" id="P26954">
    <property type="expression patterns" value="baseline and differential"/>
</dbReference>
<dbReference type="GO" id="GO:0005886">
    <property type="term" value="C:plasma membrane"/>
    <property type="evidence" value="ECO:0000314"/>
    <property type="project" value="MGI"/>
</dbReference>
<dbReference type="GO" id="GO:0004896">
    <property type="term" value="F:cytokine receptor activity"/>
    <property type="evidence" value="ECO:0007669"/>
    <property type="project" value="InterPro"/>
</dbReference>
<dbReference type="CDD" id="cd00063">
    <property type="entry name" value="FN3"/>
    <property type="match status" value="1"/>
</dbReference>
<dbReference type="Gene3D" id="2.60.40.10">
    <property type="entry name" value="Immunoglobulins"/>
    <property type="match status" value="4"/>
</dbReference>
<dbReference type="InterPro" id="IPR003961">
    <property type="entry name" value="FN3_dom"/>
</dbReference>
<dbReference type="InterPro" id="IPR036116">
    <property type="entry name" value="FN3_sf"/>
</dbReference>
<dbReference type="InterPro" id="IPR015152">
    <property type="entry name" value="Growth/epo_recpt_lig-bind"/>
</dbReference>
<dbReference type="InterPro" id="IPR003531">
    <property type="entry name" value="Hempt_rcpt_S_F1_CS"/>
</dbReference>
<dbReference type="InterPro" id="IPR013783">
    <property type="entry name" value="Ig-like_fold"/>
</dbReference>
<dbReference type="InterPro" id="IPR011365">
    <property type="entry name" value="IL3_rcpt_beta"/>
</dbReference>
<dbReference type="InterPro" id="IPR048668">
    <property type="entry name" value="IL3RB_N"/>
</dbReference>
<dbReference type="InterPro" id="IPR015373">
    <property type="entry name" value="Interferon/interleukin_rcp_dom"/>
</dbReference>
<dbReference type="PANTHER" id="PTHR23037">
    <property type="entry name" value="CYTOKINE RECEPTOR"/>
    <property type="match status" value="1"/>
</dbReference>
<dbReference type="PANTHER" id="PTHR23037:SF22">
    <property type="entry name" value="CYTOKINE RECEPTOR COMMON SUBUNIT BETA"/>
    <property type="match status" value="1"/>
</dbReference>
<dbReference type="Pfam" id="PF09067">
    <property type="entry name" value="EpoR_lig-bind"/>
    <property type="match status" value="1"/>
</dbReference>
<dbReference type="Pfam" id="PF21460">
    <property type="entry name" value="IL3Rb_N"/>
    <property type="match status" value="1"/>
</dbReference>
<dbReference type="Pfam" id="PF09294">
    <property type="entry name" value="Interfer-bind"/>
    <property type="match status" value="1"/>
</dbReference>
<dbReference type="PIRSF" id="PIRSF001956">
    <property type="entry name" value="IL3R_beta_c"/>
    <property type="match status" value="1"/>
</dbReference>
<dbReference type="SMART" id="SM00060">
    <property type="entry name" value="FN3"/>
    <property type="match status" value="2"/>
</dbReference>
<dbReference type="SUPFAM" id="SSF49265">
    <property type="entry name" value="Fibronectin type III"/>
    <property type="match status" value="4"/>
</dbReference>
<dbReference type="PROSITE" id="PS50853">
    <property type="entry name" value="FN3"/>
    <property type="match status" value="2"/>
</dbReference>
<dbReference type="PROSITE" id="PS01355">
    <property type="entry name" value="HEMATOPO_REC_S_F1"/>
    <property type="match status" value="1"/>
</dbReference>
<organism>
    <name type="scientific">Mus musculus</name>
    <name type="common">Mouse</name>
    <dbReference type="NCBI Taxonomy" id="10090"/>
    <lineage>
        <taxon>Eukaryota</taxon>
        <taxon>Metazoa</taxon>
        <taxon>Chordata</taxon>
        <taxon>Craniata</taxon>
        <taxon>Vertebrata</taxon>
        <taxon>Euteleostomi</taxon>
        <taxon>Mammalia</taxon>
        <taxon>Eutheria</taxon>
        <taxon>Euarchontoglires</taxon>
        <taxon>Glires</taxon>
        <taxon>Rodentia</taxon>
        <taxon>Myomorpha</taxon>
        <taxon>Muroidea</taxon>
        <taxon>Muridae</taxon>
        <taxon>Murinae</taxon>
        <taxon>Mus</taxon>
        <taxon>Mus</taxon>
    </lineage>
</organism>
<sequence length="878" mass="97195">MDQQMALTWGLCYMALVALCWGHEVTEEEETVPLKTLECYNDYTNRIICSWADTEDAQGLINMTLLYHQLDKIQSVSCELSEKLMWSECPSSHRCVPRRCVIPYTRFSNGDNDYYSFQPDRDLGIQLMVPLAQHVQPPPPKDIHISPSGDHFLLEWSVSLGDSQVSWLSSKDIEFEVAYKRLQDSWEDASSLHTSNFQVNLEPKLFLPNSIYAARVRTRLSAGSSLSGRPSRWSPEVHWDSQPGDKAQPQNLQCFFDGIQSLHCSWEVWTQTTGSVSFGLFYRPSPAAPEEKCSPVVKEPQASVYTRYRCSLPVPEPSAHSQYTVSVKHLEQGKFIMSYYHIQMEPPILNQTKNRDSYSLHWETQKIPKYIDHTFQVQYKKKSESWKDSKTENLGRVNSMDLPQLEPDTSYCARVRVKPISDYDGIWSEWSNEYTWTTDWVMPTLWIVLILVFLIFTLLLALHFGRVYGYRTYRKWKEKIPNPSKSLLFQDGGKGLWPPGSMAAFATKNPALQGPQSRLLAEQQGVSYEHLEDNNVSPLTIEDPNIIRDPPSRPDTTPAASSESTEQLPNVQVEGPIPSSRPRKQLPSFDFNGPYLGPPQSHSLPDLPGQLGSPQVGGSLKPALPGSLEYMCLPPGGQVQLVPLSQVMGQGQAMDVQCGSSLETTGSPSVEPKENPPVELSVEKQEARDNPMTLPISSGGPEGSMMASDYVTPGDPVLTLPTGPLSTSLGPSLGLPSAQSPSLCLKLPRVPSGSPALGPPGFEDYVELPPSVSQAATSPPGHPAPPVASSPTVIPGEPREEVGPASPHPEGLLVLQQVGDYCFLPGLGPGSLSPHSKPPSPSLCSETEDLDQDLSVKKFPYQPLPQAPAIQFFKSLKY</sequence>
<proteinExistence type="evidence at protein level"/>
<protein>
    <recommendedName>
        <fullName>Interleukin-3 receptor class 2 subunit beta</fullName>
        <shortName>IL-3 receptor class 2 subunit beta</shortName>
        <shortName>IL-3R class 2 subunit beta</shortName>
    </recommendedName>
    <alternativeName>
        <fullName>Colony-stimulating factor 2 receptor subunit beta-2</fullName>
    </alternativeName>
    <alternativeName>
        <fullName>Interleukin-3 receptor class II beta chain</fullName>
    </alternativeName>
</protein>
<evidence type="ECO:0000250" key="1"/>
<evidence type="ECO:0000250" key="2">
    <source>
        <dbReference type="UniProtKB" id="P26955"/>
    </source>
</evidence>
<evidence type="ECO:0000255" key="3"/>
<evidence type="ECO:0000255" key="4">
    <source>
        <dbReference type="PROSITE-ProRule" id="PRU00316"/>
    </source>
</evidence>
<evidence type="ECO:0000256" key="5">
    <source>
        <dbReference type="SAM" id="MobiDB-lite"/>
    </source>
</evidence>
<evidence type="ECO:0000305" key="6"/>
<evidence type="ECO:0007829" key="7">
    <source>
        <dbReference type="PDB" id="4QQV"/>
    </source>
</evidence>
<gene>
    <name type="primary">Csf2rb2</name>
    <name type="synonym">Ai2ca</name>
    <name type="synonym">Il3r</name>
    <name type="synonym">Il3rb2</name>
</gene>
<name>IL3B2_MOUSE</name>
<feature type="signal peptide" evidence="3">
    <location>
        <begin position="1"/>
        <end position="22"/>
    </location>
</feature>
<feature type="chain" id="PRO_0000010885" description="Interleukin-3 receptor class 2 subunit beta">
    <location>
        <begin position="23"/>
        <end position="878"/>
    </location>
</feature>
<feature type="topological domain" description="Extracellular" evidence="3">
    <location>
        <begin position="23"/>
        <end position="440"/>
    </location>
</feature>
<feature type="transmembrane region" description="Helical" evidence="3">
    <location>
        <begin position="441"/>
        <end position="462"/>
    </location>
</feature>
<feature type="topological domain" description="Cytoplasmic" evidence="3">
    <location>
        <begin position="463"/>
        <end position="878"/>
    </location>
</feature>
<feature type="domain" description="Fibronectin type-III 1" evidence="4">
    <location>
        <begin position="139"/>
        <end position="244"/>
    </location>
</feature>
<feature type="domain" description="Fibronectin type-III 2" evidence="4">
    <location>
        <begin position="343"/>
        <end position="438"/>
    </location>
</feature>
<feature type="region of interest" description="Disordered" evidence="5">
    <location>
        <begin position="223"/>
        <end position="244"/>
    </location>
</feature>
<feature type="region of interest" description="Disordered" evidence="5">
    <location>
        <begin position="539"/>
        <end position="620"/>
    </location>
</feature>
<feature type="region of interest" description="Disordered" evidence="5">
    <location>
        <begin position="660"/>
        <end position="709"/>
    </location>
</feature>
<feature type="region of interest" description="Disordered" evidence="5">
    <location>
        <begin position="771"/>
        <end position="810"/>
    </location>
</feature>
<feature type="region of interest" description="Disordered" evidence="5">
    <location>
        <begin position="829"/>
        <end position="849"/>
    </location>
</feature>
<feature type="short sequence motif" description="WSXWS motif">
    <location>
        <begin position="427"/>
        <end position="431"/>
    </location>
</feature>
<feature type="short sequence motif" description="Box 1 motif">
    <location>
        <begin position="476"/>
        <end position="484"/>
    </location>
</feature>
<feature type="compositionally biased region" description="Polar residues" evidence="5">
    <location>
        <begin position="554"/>
        <end position="570"/>
    </location>
</feature>
<feature type="compositionally biased region" description="Basic and acidic residues" evidence="5">
    <location>
        <begin position="671"/>
        <end position="689"/>
    </location>
</feature>
<feature type="modified residue" description="Phosphoserine" evidence="2">
    <location>
        <position position="752"/>
    </location>
</feature>
<feature type="modified residue" description="Phosphoserine" evidence="2">
    <location>
        <position position="754"/>
    </location>
</feature>
<feature type="modified residue" description="Phosphotyrosine" evidence="2">
    <location>
        <position position="765"/>
    </location>
</feature>
<feature type="glycosylation site" description="N-linked (GlcNAc...) asparagine" evidence="3">
    <location>
        <position position="62"/>
    </location>
</feature>
<feature type="glycosylation site" description="N-linked (GlcNAc...) asparagine" evidence="3">
    <location>
        <position position="350"/>
    </location>
</feature>
<feature type="disulfide bond" evidence="1">
    <location>
        <begin position="39"/>
        <end position="49"/>
    </location>
</feature>
<feature type="disulfide bond" evidence="1">
    <location>
        <begin position="78"/>
        <end position="95"/>
    </location>
</feature>
<feature type="disulfide bond" evidence="1">
    <location>
        <begin position="254"/>
        <end position="264"/>
    </location>
</feature>
<feature type="disulfide bond" evidence="1">
    <location>
        <begin position="293"/>
        <end position="310"/>
    </location>
</feature>
<feature type="helix" evidence="7">
    <location>
        <begin position="32"/>
        <end position="35"/>
    </location>
</feature>
<feature type="strand" evidence="7">
    <location>
        <begin position="38"/>
        <end position="41"/>
    </location>
</feature>
<feature type="strand" evidence="7">
    <location>
        <begin position="43"/>
        <end position="45"/>
    </location>
</feature>
<feature type="strand" evidence="7">
    <location>
        <begin position="47"/>
        <end position="54"/>
    </location>
</feature>
<feature type="helix" evidence="7">
    <location>
        <begin position="57"/>
        <end position="59"/>
    </location>
</feature>
<feature type="strand" evidence="7">
    <location>
        <begin position="63"/>
        <end position="69"/>
    </location>
</feature>
<feature type="strand" evidence="7">
    <location>
        <begin position="95"/>
        <end position="102"/>
    </location>
</feature>
<feature type="strand" evidence="7">
    <location>
        <begin position="114"/>
        <end position="121"/>
    </location>
</feature>
<feature type="strand" evidence="7">
    <location>
        <begin position="125"/>
        <end position="130"/>
    </location>
</feature>
<feature type="helix" evidence="7">
    <location>
        <begin position="132"/>
        <end position="134"/>
    </location>
</feature>
<feature type="strand" evidence="7">
    <location>
        <begin position="141"/>
        <end position="147"/>
    </location>
</feature>
<feature type="strand" evidence="7">
    <location>
        <begin position="149"/>
        <end position="157"/>
    </location>
</feature>
<feature type="strand" evidence="7">
    <location>
        <begin position="164"/>
        <end position="167"/>
    </location>
</feature>
<feature type="strand" evidence="7">
    <location>
        <begin position="172"/>
        <end position="181"/>
    </location>
</feature>
<feature type="strand" evidence="7">
    <location>
        <begin position="186"/>
        <end position="188"/>
    </location>
</feature>
<feature type="strand" evidence="7">
    <location>
        <begin position="190"/>
        <end position="201"/>
    </location>
</feature>
<feature type="strand" evidence="7">
    <location>
        <begin position="210"/>
        <end position="220"/>
    </location>
</feature>
<feature type="strand" evidence="7">
    <location>
        <begin position="237"/>
        <end position="240"/>
    </location>
</feature>
<feature type="strand" evidence="7">
    <location>
        <begin position="246"/>
        <end position="248"/>
    </location>
</feature>
<feature type="strand" evidence="7">
    <location>
        <begin position="250"/>
        <end position="256"/>
    </location>
</feature>
<feature type="strand" evidence="7">
    <location>
        <begin position="258"/>
        <end position="269"/>
    </location>
</feature>
<feature type="helix" evidence="7">
    <location>
        <begin position="270"/>
        <end position="274"/>
    </location>
</feature>
<feature type="strand" evidence="7">
    <location>
        <begin position="278"/>
        <end position="284"/>
    </location>
</feature>
<feature type="turn" evidence="7">
    <location>
        <begin position="285"/>
        <end position="287"/>
    </location>
</feature>
<feature type="strand" evidence="7">
    <location>
        <begin position="303"/>
        <end position="313"/>
    </location>
</feature>
<feature type="strand" evidence="7">
    <location>
        <begin position="322"/>
        <end position="329"/>
    </location>
</feature>
<feature type="strand" evidence="7">
    <location>
        <begin position="332"/>
        <end position="335"/>
    </location>
</feature>
<feature type="strand" evidence="7">
    <location>
        <begin position="353"/>
        <end position="355"/>
    </location>
</feature>
<feature type="strand" evidence="7">
    <location>
        <begin position="360"/>
        <end position="362"/>
    </location>
</feature>
<feature type="strand" evidence="7">
    <location>
        <begin position="375"/>
        <end position="379"/>
    </location>
</feature>
<feature type="strand" evidence="7">
    <location>
        <begin position="391"/>
        <end position="393"/>
    </location>
</feature>
<feature type="strand" evidence="7">
    <location>
        <begin position="398"/>
        <end position="400"/>
    </location>
</feature>
<feature type="strand" evidence="7">
    <location>
        <begin position="413"/>
        <end position="417"/>
    </location>
</feature>
<comment type="function">
    <text>In mouse, there are two classes of high-affinity IL3 receptors. One contains this IL3-specific beta subunit and the other contains the beta subunit also shared by high-affinity IL5 and GM-CSF receptors.</text>
</comment>
<comment type="subunit">
    <text>Heterodimer of an alpha and a beta subunit.</text>
</comment>
<comment type="subcellular location">
    <subcellularLocation>
        <location>Membrane</location>
        <topology>Single-pass type I membrane protein</topology>
    </subcellularLocation>
</comment>
<comment type="domain">
    <text>The WSXWS motif appears to be necessary for proper protein folding and thereby efficient intracellular transport and cell-surface receptor binding.</text>
</comment>
<comment type="domain">
    <text>The box 1 motif is required for JAK interaction and/or activation.</text>
</comment>
<comment type="similarity">
    <text evidence="6">Belongs to the type I cytokine receptor family. Type 4 subfamily.</text>
</comment>
<accession>P26954</accession>
<reference key="1">
    <citation type="journal article" date="1990" name="Science">
        <title>Cloning of an interleukin-3 receptor gene: a member of a distinct receptor gene family.</title>
        <authorList>
            <person name="Itoh N."/>
            <person name="Yonehara S."/>
            <person name="Schreurs J."/>
            <person name="Gorman D.M."/>
            <person name="Maruyama K."/>
            <person name="Ishii A."/>
            <person name="Yahara I."/>
            <person name="Arai K."/>
            <person name="Miyajima A."/>
        </authorList>
    </citation>
    <scope>NUCLEOTIDE SEQUENCE [MRNA]</scope>
</reference>
<keyword id="KW-0002">3D-structure</keyword>
<keyword id="KW-1015">Disulfide bond</keyword>
<keyword id="KW-0325">Glycoprotein</keyword>
<keyword id="KW-0472">Membrane</keyword>
<keyword id="KW-0597">Phosphoprotein</keyword>
<keyword id="KW-0675">Receptor</keyword>
<keyword id="KW-1185">Reference proteome</keyword>
<keyword id="KW-0677">Repeat</keyword>
<keyword id="KW-0732">Signal</keyword>
<keyword id="KW-0812">Transmembrane</keyword>
<keyword id="KW-1133">Transmembrane helix</keyword>